<keyword id="KW-0040">ANK repeat</keyword>
<keyword id="KW-0150">Chloroplast</keyword>
<keyword id="KW-0934">Plastid</keyword>
<keyword id="KW-0653">Protein transport</keyword>
<keyword id="KW-1185">Reference proteome</keyword>
<keyword id="KW-0809">Transit peptide</keyword>
<keyword id="KW-0813">Transport</keyword>
<proteinExistence type="inferred from homology"/>
<evidence type="ECO:0000250" key="1"/>
<evidence type="ECO:0000255" key="2"/>
<evidence type="ECO:0000305" key="3"/>
<sequence>MASIPCTFQLSARASSASAAAAARRSPRAAARLGWLRPSRLSAVVPASESGRVGPTCFFKFGNKDAEGAGIYGSQGRDDFDRDDVEQYFNYMGMLAVEGTYDKMEALLNQDIHPVDILLMLAASEGDKPKLEELLRAGAKYDVKDVDGRTALDRAADDTREFILGFAATLAA</sequence>
<organism>
    <name type="scientific">Oryza sativa subsp. indica</name>
    <name type="common">Rice</name>
    <dbReference type="NCBI Taxonomy" id="39946"/>
    <lineage>
        <taxon>Eukaryota</taxon>
        <taxon>Viridiplantae</taxon>
        <taxon>Streptophyta</taxon>
        <taxon>Embryophyta</taxon>
        <taxon>Tracheophyta</taxon>
        <taxon>Spermatophyta</taxon>
        <taxon>Magnoliopsida</taxon>
        <taxon>Liliopsida</taxon>
        <taxon>Poales</taxon>
        <taxon>Poaceae</taxon>
        <taxon>BOP clade</taxon>
        <taxon>Oryzoideae</taxon>
        <taxon>Oryzeae</taxon>
        <taxon>Oryzinae</taxon>
        <taxon>Oryza</taxon>
        <taxon>Oryza sativa</taxon>
    </lineage>
</organism>
<reference key="1">
    <citation type="journal article" date="2005" name="PLoS Biol.">
        <title>The genomes of Oryza sativa: a history of duplications.</title>
        <authorList>
            <person name="Yu J."/>
            <person name="Wang J."/>
            <person name="Lin W."/>
            <person name="Li S."/>
            <person name="Li H."/>
            <person name="Zhou J."/>
            <person name="Ni P."/>
            <person name="Dong W."/>
            <person name="Hu S."/>
            <person name="Zeng C."/>
            <person name="Zhang J."/>
            <person name="Zhang Y."/>
            <person name="Li R."/>
            <person name="Xu Z."/>
            <person name="Li S."/>
            <person name="Li X."/>
            <person name="Zheng H."/>
            <person name="Cong L."/>
            <person name="Lin L."/>
            <person name="Yin J."/>
            <person name="Geng J."/>
            <person name="Li G."/>
            <person name="Shi J."/>
            <person name="Liu J."/>
            <person name="Lv H."/>
            <person name="Li J."/>
            <person name="Wang J."/>
            <person name="Deng Y."/>
            <person name="Ran L."/>
            <person name="Shi X."/>
            <person name="Wang X."/>
            <person name="Wu Q."/>
            <person name="Li C."/>
            <person name="Ren X."/>
            <person name="Wang J."/>
            <person name="Wang X."/>
            <person name="Li D."/>
            <person name="Liu D."/>
            <person name="Zhang X."/>
            <person name="Ji Z."/>
            <person name="Zhao W."/>
            <person name="Sun Y."/>
            <person name="Zhang Z."/>
            <person name="Bao J."/>
            <person name="Han Y."/>
            <person name="Dong L."/>
            <person name="Ji J."/>
            <person name="Chen P."/>
            <person name="Wu S."/>
            <person name="Liu J."/>
            <person name="Xiao Y."/>
            <person name="Bu D."/>
            <person name="Tan J."/>
            <person name="Yang L."/>
            <person name="Ye C."/>
            <person name="Zhang J."/>
            <person name="Xu J."/>
            <person name="Zhou Y."/>
            <person name="Yu Y."/>
            <person name="Zhang B."/>
            <person name="Zhuang S."/>
            <person name="Wei H."/>
            <person name="Liu B."/>
            <person name="Lei M."/>
            <person name="Yu H."/>
            <person name="Li Y."/>
            <person name="Xu H."/>
            <person name="Wei S."/>
            <person name="He X."/>
            <person name="Fang L."/>
            <person name="Zhang Z."/>
            <person name="Zhang Y."/>
            <person name="Huang X."/>
            <person name="Su Z."/>
            <person name="Tong W."/>
            <person name="Li J."/>
            <person name="Tong Z."/>
            <person name="Li S."/>
            <person name="Ye J."/>
            <person name="Wang L."/>
            <person name="Fang L."/>
            <person name="Lei T."/>
            <person name="Chen C.-S."/>
            <person name="Chen H.-C."/>
            <person name="Xu Z."/>
            <person name="Li H."/>
            <person name="Huang H."/>
            <person name="Zhang F."/>
            <person name="Xu H."/>
            <person name="Li N."/>
            <person name="Zhao C."/>
            <person name="Li S."/>
            <person name="Dong L."/>
            <person name="Huang Y."/>
            <person name="Li L."/>
            <person name="Xi Y."/>
            <person name="Qi Q."/>
            <person name="Li W."/>
            <person name="Zhang B."/>
            <person name="Hu W."/>
            <person name="Zhang Y."/>
            <person name="Tian X."/>
            <person name="Jiao Y."/>
            <person name="Liang X."/>
            <person name="Jin J."/>
            <person name="Gao L."/>
            <person name="Zheng W."/>
            <person name="Hao B."/>
            <person name="Liu S.-M."/>
            <person name="Wang W."/>
            <person name="Yuan L."/>
            <person name="Cao M."/>
            <person name="McDermott J."/>
            <person name="Samudrala R."/>
            <person name="Wang J."/>
            <person name="Wong G.K.-S."/>
            <person name="Yang H."/>
        </authorList>
    </citation>
    <scope>NUCLEOTIDE SEQUENCE [LARGE SCALE GENOMIC DNA]</scope>
    <source>
        <strain>cv. 93-11</strain>
    </source>
</reference>
<name>LTD_ORYSI</name>
<protein>
    <recommendedName>
        <fullName>Protein LHCP TRANSLOCATION DEFECT</fullName>
    </recommendedName>
</protein>
<gene>
    <name type="primary">LTD</name>
    <name type="ORF">OsI_26226</name>
</gene>
<comment type="function">
    <text evidence="1">Involved in the import of light-harvesting complex proteins (LHCP) and subsequent routing of these proteins to the chloroplast signal recognition particle (SRP) pathway.</text>
</comment>
<comment type="subcellular location">
    <subcellularLocation>
        <location evidence="3">Plastid</location>
        <location evidence="3">Chloroplast</location>
    </subcellularLocation>
</comment>
<feature type="transit peptide" description="Chloroplast" evidence="2">
    <location>
        <begin position="1"/>
        <end position="28"/>
    </location>
</feature>
<feature type="chain" id="PRO_0000413434" description="Protein LHCP TRANSLOCATION DEFECT">
    <location>
        <begin position="29"/>
        <end position="172"/>
    </location>
</feature>
<feature type="repeat" description="ANK">
    <location>
        <begin position="114"/>
        <end position="146"/>
    </location>
</feature>
<dbReference type="EMBL" id="CM000132">
    <property type="protein sequence ID" value="EAZ04088.1"/>
    <property type="molecule type" value="Genomic_DNA"/>
</dbReference>
<dbReference type="SMR" id="A2YLX7"/>
<dbReference type="STRING" id="39946.A2YLX7"/>
<dbReference type="EnsemblPlants" id="BGIOSGA025826-TA">
    <property type="protein sequence ID" value="BGIOSGA025826-PA"/>
    <property type="gene ID" value="BGIOSGA025826"/>
</dbReference>
<dbReference type="EnsemblPlants" id="OsIR64_07g0017390.01">
    <property type="protein sequence ID" value="OsIR64_07g0017390.01"/>
    <property type="gene ID" value="OsIR64_07g0017390"/>
</dbReference>
<dbReference type="EnsemblPlants" id="OsLaMu_07g0016820.01">
    <property type="protein sequence ID" value="OsLaMu_07g0016820.01"/>
    <property type="gene ID" value="OsLaMu_07g0016820"/>
</dbReference>
<dbReference type="EnsemblPlants" id="OsLiXu_07g0017060.01">
    <property type="protein sequence ID" value="OsLiXu_07g0017060.01"/>
    <property type="gene ID" value="OsLiXu_07g0017060"/>
</dbReference>
<dbReference type="EnsemblPlants" id="OsMH63_07G016700_01">
    <property type="protein sequence ID" value="OsMH63_07G016700_01"/>
    <property type="gene ID" value="OsMH63_07G016700"/>
</dbReference>
<dbReference type="EnsemblPlants" id="OsPr106_07g0016910.01">
    <property type="protein sequence ID" value="OsPr106_07g0016910.01"/>
    <property type="gene ID" value="OsPr106_07g0016910"/>
</dbReference>
<dbReference type="EnsemblPlants" id="OsZS97_07G016730_01">
    <property type="protein sequence ID" value="OsZS97_07G016730_01"/>
    <property type="gene ID" value="OsZS97_07G016730"/>
</dbReference>
<dbReference type="Gramene" id="BGIOSGA025826-TA">
    <property type="protein sequence ID" value="BGIOSGA025826-PA"/>
    <property type="gene ID" value="BGIOSGA025826"/>
</dbReference>
<dbReference type="Gramene" id="OsIR64_07g0017390.01">
    <property type="protein sequence ID" value="OsIR64_07g0017390.01"/>
    <property type="gene ID" value="OsIR64_07g0017390"/>
</dbReference>
<dbReference type="Gramene" id="OsLaMu_07g0016820.01">
    <property type="protein sequence ID" value="OsLaMu_07g0016820.01"/>
    <property type="gene ID" value="OsLaMu_07g0016820"/>
</dbReference>
<dbReference type="Gramene" id="OsLiXu_07g0017060.01">
    <property type="protein sequence ID" value="OsLiXu_07g0017060.01"/>
    <property type="gene ID" value="OsLiXu_07g0017060"/>
</dbReference>
<dbReference type="Gramene" id="OsMH63_07G016700_01">
    <property type="protein sequence ID" value="OsMH63_07G016700_01"/>
    <property type="gene ID" value="OsMH63_07G016700"/>
</dbReference>
<dbReference type="Gramene" id="OsPr106_07g0016910.01">
    <property type="protein sequence ID" value="OsPr106_07g0016910.01"/>
    <property type="gene ID" value="OsPr106_07g0016910"/>
</dbReference>
<dbReference type="Gramene" id="OsZS97_07G016730_01">
    <property type="protein sequence ID" value="OsZS97_07G016730_01"/>
    <property type="gene ID" value="OsZS97_07G016730"/>
</dbReference>
<dbReference type="HOGENOM" id="CLU_132294_0_0_1"/>
<dbReference type="OMA" id="GPTCFFK"/>
<dbReference type="Proteomes" id="UP000007015">
    <property type="component" value="Chromosome 7"/>
</dbReference>
<dbReference type="GO" id="GO:0009941">
    <property type="term" value="C:chloroplast envelope"/>
    <property type="evidence" value="ECO:0007669"/>
    <property type="project" value="TreeGrafter"/>
</dbReference>
<dbReference type="GO" id="GO:0009570">
    <property type="term" value="C:chloroplast stroma"/>
    <property type="evidence" value="ECO:0007669"/>
    <property type="project" value="InterPro"/>
</dbReference>
<dbReference type="GO" id="GO:0090391">
    <property type="term" value="P:granum assembly"/>
    <property type="evidence" value="ECO:0007669"/>
    <property type="project" value="InterPro"/>
</dbReference>
<dbReference type="GO" id="GO:0006886">
    <property type="term" value="P:intracellular protein transport"/>
    <property type="evidence" value="ECO:0007669"/>
    <property type="project" value="InterPro"/>
</dbReference>
<dbReference type="FunFam" id="1.25.40.20:FF:000251">
    <property type="entry name" value="Protein LHCP TRANSLOCATION DEFECT"/>
    <property type="match status" value="1"/>
</dbReference>
<dbReference type="Gene3D" id="1.25.40.20">
    <property type="entry name" value="Ankyrin repeat-containing domain"/>
    <property type="match status" value="1"/>
</dbReference>
<dbReference type="InterPro" id="IPR036770">
    <property type="entry name" value="Ankyrin_rpt-contain_sf"/>
</dbReference>
<dbReference type="InterPro" id="IPR044242">
    <property type="entry name" value="LTD-like"/>
</dbReference>
<dbReference type="PANTHER" id="PTHR47317">
    <property type="entry name" value="PROTEIN LHCP TRANSLOCATION DEFECT"/>
    <property type="match status" value="1"/>
</dbReference>
<dbReference type="PANTHER" id="PTHR47317:SF1">
    <property type="entry name" value="PROTEIN LHCP TRANSLOCATION DEFECT"/>
    <property type="match status" value="1"/>
</dbReference>
<dbReference type="SUPFAM" id="SSF48403">
    <property type="entry name" value="Ankyrin repeat"/>
    <property type="match status" value="1"/>
</dbReference>
<dbReference type="PROSITE" id="PS50297">
    <property type="entry name" value="ANK_REP_REGION"/>
    <property type="match status" value="1"/>
</dbReference>
<accession>A2YLX7</accession>